<organism>
    <name type="scientific">Clostridium botulinum (strain Hall / ATCC 3502 / NCTC 13319 / Type A)</name>
    <dbReference type="NCBI Taxonomy" id="441771"/>
    <lineage>
        <taxon>Bacteria</taxon>
        <taxon>Bacillati</taxon>
        <taxon>Bacillota</taxon>
        <taxon>Clostridia</taxon>
        <taxon>Eubacteriales</taxon>
        <taxon>Clostridiaceae</taxon>
        <taxon>Clostridium</taxon>
    </lineage>
</organism>
<sequence>MKYSGYHLVIDLFGCNFDQLENTEYIIEMLKKLARALDTKIVAKAFHKFHPQGFSGALIISESHITIHTWPEDAYIGIDIFTCSKCFDPRKIVAYLKENLIFKKVEIKEILRGKID</sequence>
<name>SPEH_CLOBH</name>
<comment type="function">
    <text evidence="1">Catalyzes the decarboxylation of S-adenosylmethionine to S-adenosylmethioninamine (dcAdoMet), the propylamine donor required for the synthesis of the polyamines spermine and spermidine from the diamine putrescine.</text>
</comment>
<comment type="catalytic activity">
    <reaction evidence="1">
        <text>S-adenosyl-L-methionine + H(+) = S-adenosyl 3-(methylsulfanyl)propylamine + CO2</text>
        <dbReference type="Rhea" id="RHEA:15981"/>
        <dbReference type="ChEBI" id="CHEBI:15378"/>
        <dbReference type="ChEBI" id="CHEBI:16526"/>
        <dbReference type="ChEBI" id="CHEBI:57443"/>
        <dbReference type="ChEBI" id="CHEBI:59789"/>
        <dbReference type="EC" id="4.1.1.50"/>
    </reaction>
</comment>
<comment type="cofactor">
    <cofactor evidence="1">
        <name>pyruvate</name>
        <dbReference type="ChEBI" id="CHEBI:15361"/>
    </cofactor>
    <text evidence="1">Binds 1 pyruvoyl group covalently per subunit.</text>
</comment>
<comment type="pathway">
    <text evidence="1">Amine and polyamine biosynthesis; S-adenosylmethioninamine biosynthesis; S-adenosylmethioninamine from S-adenosyl-L-methionine: step 1/1.</text>
</comment>
<comment type="subunit">
    <text evidence="1">Heterotetramer of two alpha and two beta chains arranged as a dimer of alpha/beta heterodimers.</text>
</comment>
<comment type="PTM">
    <text evidence="1">Is synthesized initially as an inactive proenzyme. Formation of the active enzyme involves a self-maturation process in which the active site pyruvoyl group is generated from an internal serine residue via an autocatalytic post-translational modification. Two non-identical subunits are generated from the proenzyme in this reaction, and the pyruvate is formed at the N-terminus of the alpha chain, which is derived from the carboxyl end of the proenzyme. The post-translation cleavage follows an unusual pathway, termed non-hydrolytic serinolysis, in which the side chain hydroxyl group of the serine supplies its oxygen atom to form the C-terminus of the beta chain, while the remainder of the serine residue undergoes an oxidative deamination to produce ammonia and the pyruvoyl group blocking the N-terminus of the alpha chain.</text>
</comment>
<comment type="similarity">
    <text evidence="1">Belongs to the prokaryotic AdoMetDC family. Type 1 subfamily.</text>
</comment>
<keyword id="KW-0068">Autocatalytic cleavage</keyword>
<keyword id="KW-0210">Decarboxylase</keyword>
<keyword id="KW-0456">Lyase</keyword>
<keyword id="KW-0620">Polyamine biosynthesis</keyword>
<keyword id="KW-0670">Pyruvate</keyword>
<keyword id="KW-1185">Reference proteome</keyword>
<keyword id="KW-0949">S-adenosyl-L-methionine</keyword>
<keyword id="KW-0704">Schiff base</keyword>
<keyword id="KW-0745">Spermidine biosynthesis</keyword>
<keyword id="KW-0865">Zymogen</keyword>
<reference key="1">
    <citation type="journal article" date="2007" name="Genome Res.">
        <title>Genome sequence of a proteolytic (Group I) Clostridium botulinum strain Hall A and comparative analysis of the clostridial genomes.</title>
        <authorList>
            <person name="Sebaihia M."/>
            <person name="Peck M.W."/>
            <person name="Minton N.P."/>
            <person name="Thomson N.R."/>
            <person name="Holden M.T.G."/>
            <person name="Mitchell W.J."/>
            <person name="Carter A.T."/>
            <person name="Bentley S.D."/>
            <person name="Mason D.R."/>
            <person name="Crossman L."/>
            <person name="Paul C.J."/>
            <person name="Ivens A."/>
            <person name="Wells-Bennik M.H.J."/>
            <person name="Davis I.J."/>
            <person name="Cerdeno-Tarraga A.M."/>
            <person name="Churcher C."/>
            <person name="Quail M.A."/>
            <person name="Chillingworth T."/>
            <person name="Feltwell T."/>
            <person name="Fraser A."/>
            <person name="Goodhead I."/>
            <person name="Hance Z."/>
            <person name="Jagels K."/>
            <person name="Larke N."/>
            <person name="Maddison M."/>
            <person name="Moule S."/>
            <person name="Mungall K."/>
            <person name="Norbertczak H."/>
            <person name="Rabbinowitsch E."/>
            <person name="Sanders M."/>
            <person name="Simmonds M."/>
            <person name="White B."/>
            <person name="Whithead S."/>
            <person name="Parkhill J."/>
        </authorList>
    </citation>
    <scope>NUCLEOTIDE SEQUENCE [LARGE SCALE GENOMIC DNA]</scope>
    <source>
        <strain>Hall / ATCC 3502 / NCTC 13319 / Type A</strain>
    </source>
</reference>
<reference key="2">
    <citation type="journal article" date="2007" name="PLoS ONE">
        <title>Analysis of the neurotoxin complex genes in Clostridium botulinum A1-A4 and B1 strains: BoNT/A3, /Ba4 and /B1 clusters are located within plasmids.</title>
        <authorList>
            <person name="Smith T.J."/>
            <person name="Hill K.K."/>
            <person name="Foley B.T."/>
            <person name="Detter J.C."/>
            <person name="Munk A.C."/>
            <person name="Bruce D.C."/>
            <person name="Doggett N.A."/>
            <person name="Smith L.A."/>
            <person name="Marks J.D."/>
            <person name="Xie G."/>
            <person name="Brettin T.S."/>
        </authorList>
    </citation>
    <scope>NUCLEOTIDE SEQUENCE [LARGE SCALE GENOMIC DNA]</scope>
    <source>
        <strain>Hall / ATCC 3502 / NCTC 13319 / Type A</strain>
    </source>
</reference>
<dbReference type="EC" id="4.1.1.50" evidence="1"/>
<dbReference type="EMBL" id="CP000727">
    <property type="protein sequence ID" value="ABS36461.1"/>
    <property type="molecule type" value="Genomic_DNA"/>
</dbReference>
<dbReference type="EMBL" id="AM412317">
    <property type="protein sequence ID" value="CAL84922.1"/>
    <property type="molecule type" value="Genomic_DNA"/>
</dbReference>
<dbReference type="RefSeq" id="YP_001255845.1">
    <property type="nucleotide sequence ID" value="NC_009495.1"/>
</dbReference>
<dbReference type="RefSeq" id="YP_001389088.1">
    <property type="nucleotide sequence ID" value="NC_009698.1"/>
</dbReference>
<dbReference type="SMR" id="A5I788"/>
<dbReference type="GeneID" id="5187010"/>
<dbReference type="KEGG" id="cbh:CLC_3308"/>
<dbReference type="KEGG" id="cbo:CBO3363"/>
<dbReference type="PATRIC" id="fig|413999.7.peg.3339"/>
<dbReference type="HOGENOM" id="CLU_125470_2_3_9"/>
<dbReference type="UniPathway" id="UPA00331">
    <property type="reaction ID" value="UER00451"/>
</dbReference>
<dbReference type="PRO" id="PR:A5I788"/>
<dbReference type="Proteomes" id="UP000001986">
    <property type="component" value="Chromosome"/>
</dbReference>
<dbReference type="GO" id="GO:0005829">
    <property type="term" value="C:cytosol"/>
    <property type="evidence" value="ECO:0000318"/>
    <property type="project" value="GO_Central"/>
</dbReference>
<dbReference type="GO" id="GO:0004014">
    <property type="term" value="F:adenosylmethionine decarboxylase activity"/>
    <property type="evidence" value="ECO:0000318"/>
    <property type="project" value="GO_Central"/>
</dbReference>
<dbReference type="GO" id="GO:0008295">
    <property type="term" value="P:spermidine biosynthetic process"/>
    <property type="evidence" value="ECO:0000318"/>
    <property type="project" value="GO_Central"/>
</dbReference>
<dbReference type="FunFam" id="3.60.90.10:FF:000012">
    <property type="entry name" value="S-adenosylmethionine decarboxylase proenzyme"/>
    <property type="match status" value="1"/>
</dbReference>
<dbReference type="Gene3D" id="3.60.90.10">
    <property type="entry name" value="S-adenosylmethionine decarboxylase"/>
    <property type="match status" value="1"/>
</dbReference>
<dbReference type="HAMAP" id="MF_00464">
    <property type="entry name" value="AdoMetDC_1"/>
    <property type="match status" value="1"/>
</dbReference>
<dbReference type="InterPro" id="IPR003826">
    <property type="entry name" value="AdoMetDC_fam_prok"/>
</dbReference>
<dbReference type="InterPro" id="IPR016067">
    <property type="entry name" value="S-AdoMet_deCO2ase_core"/>
</dbReference>
<dbReference type="InterPro" id="IPR017716">
    <property type="entry name" value="S-AdoMet_deCOase_pro-enz"/>
</dbReference>
<dbReference type="NCBIfam" id="TIGR03330">
    <property type="entry name" value="SAM_DCase_Bsu"/>
    <property type="match status" value="1"/>
</dbReference>
<dbReference type="PANTHER" id="PTHR33866">
    <property type="entry name" value="S-ADENOSYLMETHIONINE DECARBOXYLASE PROENZYME"/>
    <property type="match status" value="1"/>
</dbReference>
<dbReference type="PANTHER" id="PTHR33866:SF2">
    <property type="entry name" value="S-ADENOSYLMETHIONINE DECARBOXYLASE PROENZYME"/>
    <property type="match status" value="1"/>
</dbReference>
<dbReference type="Pfam" id="PF02675">
    <property type="entry name" value="AdoMet_dc"/>
    <property type="match status" value="1"/>
</dbReference>
<dbReference type="SUPFAM" id="SSF56276">
    <property type="entry name" value="S-adenosylmethionine decarboxylase"/>
    <property type="match status" value="1"/>
</dbReference>
<feature type="chain" id="PRO_1000193177" description="S-adenosylmethionine decarboxylase beta chain" evidence="1">
    <location>
        <begin position="1"/>
        <end position="62"/>
    </location>
</feature>
<feature type="chain" id="PRO_1000193178" description="S-adenosylmethionine decarboxylase alpha chain" evidence="1">
    <location>
        <begin position="63"/>
        <end position="116"/>
    </location>
</feature>
<feature type="active site" description="Schiff-base intermediate with substrate; via pyruvic acid" evidence="1">
    <location>
        <position position="63"/>
    </location>
</feature>
<feature type="active site" description="Proton acceptor; for processing activity" evidence="1">
    <location>
        <position position="68"/>
    </location>
</feature>
<feature type="active site" description="Proton donor; for catalytic activity" evidence="1">
    <location>
        <position position="83"/>
    </location>
</feature>
<feature type="site" description="Cleavage (non-hydrolytic); by autolysis" evidence="1">
    <location>
        <begin position="62"/>
        <end position="63"/>
    </location>
</feature>
<feature type="modified residue" description="Pyruvic acid (Ser); by autocatalysis" evidence="1">
    <location>
        <position position="63"/>
    </location>
</feature>
<evidence type="ECO:0000255" key="1">
    <source>
        <dbReference type="HAMAP-Rule" id="MF_00464"/>
    </source>
</evidence>
<proteinExistence type="inferred from homology"/>
<protein>
    <recommendedName>
        <fullName evidence="1">S-adenosylmethionine decarboxylase proenzyme</fullName>
        <shortName evidence="1">AdoMetDC</shortName>
        <shortName evidence="1">SAMDC</shortName>
        <ecNumber evidence="1">4.1.1.50</ecNumber>
    </recommendedName>
    <component>
        <recommendedName>
            <fullName evidence="1">S-adenosylmethionine decarboxylase beta chain</fullName>
        </recommendedName>
    </component>
    <component>
        <recommendedName>
            <fullName evidence="1">S-adenosylmethionine decarboxylase alpha chain</fullName>
        </recommendedName>
    </component>
</protein>
<gene>
    <name evidence="1" type="primary">speH</name>
    <name type="ordered locus">CBO3363</name>
    <name type="ordered locus">CLC_3308</name>
</gene>
<accession>A5I788</accession>
<accession>A7G8H3</accession>